<sequence length="269" mass="28943">MVKLLSIGGSDASGGAGIEADLKTFQEYGAFGVATLTAIVTMDPSRNWSHRVHSLEEDCVRDQLETAFAGVGVSAVKSGMLASVHAIECVAEYLERFAVAAYVFDPVMVCKGSGDALHRELNELMIQKLLPRATVVTPNLFETAQIAGISVPRTVDEMKEGARLIHERGASHVFVKGGGRLPGCKHALDVFYDGKTFHLVEDELVQSGWNHGAGCTVSAAITAGLGRGLTAYDAILSAKRFVTTGLRHGFQVNQWVGTGNLSKWRDRFH</sequence>
<reference key="1">
    <citation type="journal article" date="1998" name="Science">
        <title>Complete genome sequence of Treponema pallidum, the syphilis spirochete.</title>
        <authorList>
            <person name="Fraser C.M."/>
            <person name="Norris S.J."/>
            <person name="Weinstock G.M."/>
            <person name="White O."/>
            <person name="Sutton G.G."/>
            <person name="Dodson R.J."/>
            <person name="Gwinn M.L."/>
            <person name="Hickey E.K."/>
            <person name="Clayton R.A."/>
            <person name="Ketchum K.A."/>
            <person name="Sodergren E."/>
            <person name="Hardham J.M."/>
            <person name="McLeod M.P."/>
            <person name="Salzberg S.L."/>
            <person name="Peterson J.D."/>
            <person name="Khalak H.G."/>
            <person name="Richardson D.L."/>
            <person name="Howell J.K."/>
            <person name="Chidambaram M."/>
            <person name="Utterback T.R."/>
            <person name="McDonald L.A."/>
            <person name="Artiach P."/>
            <person name="Bowman C."/>
            <person name="Cotton M.D."/>
            <person name="Fujii C."/>
            <person name="Garland S.A."/>
            <person name="Hatch B."/>
            <person name="Horst K."/>
            <person name="Roberts K.M."/>
            <person name="Sandusky M."/>
            <person name="Weidman J.F."/>
            <person name="Smith H.O."/>
            <person name="Venter J.C."/>
        </authorList>
    </citation>
    <scope>NUCLEOTIDE SEQUENCE [LARGE SCALE GENOMIC DNA]</scope>
    <source>
        <strain>Nichols</strain>
    </source>
</reference>
<accession>O83153</accession>
<protein>
    <recommendedName>
        <fullName>Putative pyridoxine kinase</fullName>
        <ecNumber>2.7.1.35</ecNumber>
    </recommendedName>
    <alternativeName>
        <fullName>PN/PL/PM kinase</fullName>
    </alternativeName>
    <alternativeName>
        <fullName>Pyridoxal kinase</fullName>
    </alternativeName>
    <alternativeName>
        <fullName>Pyridoxamine kinase</fullName>
    </alternativeName>
    <alternativeName>
        <fullName>Vitamin B6 kinase</fullName>
    </alternativeName>
</protein>
<comment type="function">
    <text evidence="1">Phosphorylates B6 vitamers; functions in a salvage pathway. Uses pyridoxal, pyridoxine, and pyridoxamine as substrates (By similarity).</text>
</comment>
<comment type="catalytic activity">
    <reaction>
        <text>pyridoxal + ATP = pyridoxal 5'-phosphate + ADP + H(+)</text>
        <dbReference type="Rhea" id="RHEA:10224"/>
        <dbReference type="ChEBI" id="CHEBI:15378"/>
        <dbReference type="ChEBI" id="CHEBI:17310"/>
        <dbReference type="ChEBI" id="CHEBI:30616"/>
        <dbReference type="ChEBI" id="CHEBI:456216"/>
        <dbReference type="ChEBI" id="CHEBI:597326"/>
        <dbReference type="EC" id="2.7.1.35"/>
    </reaction>
</comment>
<comment type="similarity">
    <text evidence="2">Belongs to the ThiD family.</text>
</comment>
<name>PDXK_TREPA</name>
<feature type="chain" id="PRO_0000192037" description="Putative pyridoxine kinase">
    <location>
        <begin position="1"/>
        <end position="269"/>
    </location>
</feature>
<feature type="binding site" evidence="1">
    <location>
        <position position="139"/>
    </location>
    <ligand>
        <name>ATP</name>
        <dbReference type="ChEBI" id="CHEBI:30616"/>
    </ligand>
</feature>
<feature type="binding site" evidence="1">
    <location>
        <position position="142"/>
    </location>
    <ligand>
        <name>Mg(2+)</name>
        <dbReference type="ChEBI" id="CHEBI:18420"/>
    </ligand>
</feature>
<feature type="binding site" evidence="1">
    <location>
        <begin position="176"/>
        <end position="180"/>
    </location>
    <ligand>
        <name>ATP</name>
        <dbReference type="ChEBI" id="CHEBI:30616"/>
    </ligand>
</feature>
<feature type="binding site" evidence="1">
    <location>
        <position position="189"/>
    </location>
    <ligand>
        <name>ATP</name>
        <dbReference type="ChEBI" id="CHEBI:30616"/>
    </ligand>
</feature>
<feature type="binding site" evidence="1">
    <location>
        <position position="205"/>
    </location>
    <ligand>
        <name>ATP</name>
        <dbReference type="ChEBI" id="CHEBI:30616"/>
    </ligand>
</feature>
<feature type="binding site" evidence="1">
    <location>
        <position position="214"/>
    </location>
    <ligand>
        <name>ATP</name>
        <dbReference type="ChEBI" id="CHEBI:30616"/>
    </ligand>
</feature>
<feature type="binding site" evidence="1">
    <location>
        <position position="239"/>
    </location>
    <ligand>
        <name>ATP</name>
        <dbReference type="ChEBI" id="CHEBI:30616"/>
    </ligand>
</feature>
<evidence type="ECO:0000250" key="1"/>
<evidence type="ECO:0000305" key="2"/>
<proteinExistence type="inferred from homology"/>
<dbReference type="EC" id="2.7.1.35"/>
<dbReference type="EMBL" id="AE000520">
    <property type="protein sequence ID" value="AAC65105.1"/>
    <property type="molecule type" value="Genomic_DNA"/>
</dbReference>
<dbReference type="PIR" id="B71365">
    <property type="entry name" value="B71365"/>
</dbReference>
<dbReference type="SMR" id="O83153"/>
<dbReference type="IntAct" id="O83153">
    <property type="interactions" value="2"/>
</dbReference>
<dbReference type="STRING" id="243276.TP_0115"/>
<dbReference type="EnsemblBacteria" id="AAC65105">
    <property type="protein sequence ID" value="AAC65105"/>
    <property type="gene ID" value="TP_0115"/>
</dbReference>
<dbReference type="KEGG" id="tpa:TP_0115"/>
<dbReference type="KEGG" id="tpw:TPANIC_0115"/>
<dbReference type="eggNOG" id="COG0351">
    <property type="taxonomic scope" value="Bacteria"/>
</dbReference>
<dbReference type="HOGENOM" id="CLU_020520_1_0_12"/>
<dbReference type="OrthoDB" id="9810880at2"/>
<dbReference type="Proteomes" id="UP000000811">
    <property type="component" value="Chromosome"/>
</dbReference>
<dbReference type="GO" id="GO:0005829">
    <property type="term" value="C:cytosol"/>
    <property type="evidence" value="ECO:0007669"/>
    <property type="project" value="TreeGrafter"/>
</dbReference>
<dbReference type="GO" id="GO:0005524">
    <property type="term" value="F:ATP binding"/>
    <property type="evidence" value="ECO:0007669"/>
    <property type="project" value="UniProtKB-KW"/>
</dbReference>
<dbReference type="GO" id="GO:0008902">
    <property type="term" value="F:hydroxymethylpyrimidine kinase activity"/>
    <property type="evidence" value="ECO:0007669"/>
    <property type="project" value="TreeGrafter"/>
</dbReference>
<dbReference type="GO" id="GO:0046872">
    <property type="term" value="F:metal ion binding"/>
    <property type="evidence" value="ECO:0007669"/>
    <property type="project" value="UniProtKB-KW"/>
</dbReference>
<dbReference type="GO" id="GO:0008972">
    <property type="term" value="F:phosphomethylpyrimidine kinase activity"/>
    <property type="evidence" value="ECO:0007669"/>
    <property type="project" value="InterPro"/>
</dbReference>
<dbReference type="GO" id="GO:0008478">
    <property type="term" value="F:pyridoxal kinase activity"/>
    <property type="evidence" value="ECO:0007669"/>
    <property type="project" value="UniProtKB-EC"/>
</dbReference>
<dbReference type="GO" id="GO:0009228">
    <property type="term" value="P:thiamine biosynthetic process"/>
    <property type="evidence" value="ECO:0007669"/>
    <property type="project" value="InterPro"/>
</dbReference>
<dbReference type="CDD" id="cd01169">
    <property type="entry name" value="HMPP_kinase"/>
    <property type="match status" value="1"/>
</dbReference>
<dbReference type="FunFam" id="3.40.1190.20:FF:000003">
    <property type="entry name" value="Phosphomethylpyrimidine kinase ThiD"/>
    <property type="match status" value="1"/>
</dbReference>
<dbReference type="Gene3D" id="3.40.1190.20">
    <property type="match status" value="1"/>
</dbReference>
<dbReference type="InterPro" id="IPR004399">
    <property type="entry name" value="HMP/HMP-P_kinase_dom"/>
</dbReference>
<dbReference type="InterPro" id="IPR013749">
    <property type="entry name" value="PM/HMP-P_kinase-1"/>
</dbReference>
<dbReference type="InterPro" id="IPR029056">
    <property type="entry name" value="Ribokinase-like"/>
</dbReference>
<dbReference type="NCBIfam" id="TIGR00097">
    <property type="entry name" value="HMP-P_kinase"/>
    <property type="match status" value="1"/>
</dbReference>
<dbReference type="PANTHER" id="PTHR20858">
    <property type="entry name" value="PHOSPHOMETHYLPYRIMIDINE KINASE"/>
    <property type="match status" value="1"/>
</dbReference>
<dbReference type="PANTHER" id="PTHR20858:SF19">
    <property type="entry name" value="PYRIDOXINE KINASE"/>
    <property type="match status" value="1"/>
</dbReference>
<dbReference type="Pfam" id="PF08543">
    <property type="entry name" value="Phos_pyr_kin"/>
    <property type="match status" value="1"/>
</dbReference>
<dbReference type="SUPFAM" id="SSF53613">
    <property type="entry name" value="Ribokinase-like"/>
    <property type="match status" value="1"/>
</dbReference>
<organism>
    <name type="scientific">Treponema pallidum (strain Nichols)</name>
    <dbReference type="NCBI Taxonomy" id="243276"/>
    <lineage>
        <taxon>Bacteria</taxon>
        <taxon>Pseudomonadati</taxon>
        <taxon>Spirochaetota</taxon>
        <taxon>Spirochaetia</taxon>
        <taxon>Spirochaetales</taxon>
        <taxon>Treponemataceae</taxon>
        <taxon>Treponema</taxon>
    </lineage>
</organism>
<gene>
    <name type="primary">pdxK</name>
    <name type="ordered locus">TP_0115</name>
</gene>
<keyword id="KW-0067">ATP-binding</keyword>
<keyword id="KW-0418">Kinase</keyword>
<keyword id="KW-0460">Magnesium</keyword>
<keyword id="KW-0479">Metal-binding</keyword>
<keyword id="KW-0547">Nucleotide-binding</keyword>
<keyword id="KW-1185">Reference proteome</keyword>
<keyword id="KW-0808">Transferase</keyword>